<accession>Q65G33</accession>
<accession>Q62RI8</accession>
<sequence length="210" mass="24555">MEHHKTYHAKELQTEKGSVLIEGPISPEKLAEYEFHDELTAFRPSQKQHEALIEIAGLPEGRIIIARFRQTIVGYVTYVYPDPLERWSEGNMENLIELGAIEVIPAFRGHSVGKTLLAVSMMDPQMEKYIIITTEYYWHWDLKGTNKDVWEYRKMMEKMMNAGGLVWFATDDPEISSHPANCLMARIGKEVSQESIERFDRLRFHNRFMY</sequence>
<protein>
    <recommendedName>
        <fullName evidence="8">Acetoin utilization protein AcuA</fullName>
        <ecNumber evidence="1 8">2.3.1.-</ecNumber>
    </recommendedName>
    <alternativeName>
        <fullName evidence="7">Acetoin dehydrogenase</fullName>
    </alternativeName>
    <alternativeName>
        <fullName evidence="1">Protein acetyltransferase AcuA</fullName>
    </alternativeName>
</protein>
<organism>
    <name type="scientific">Bacillus licheniformis (strain ATCC 14580 / DSM 13 / JCM 2505 / CCUG 7422 / NBRC 12200 / NCIMB 9375 / NCTC 10341 / NRRL NRS-1264 / Gibson 46)</name>
    <dbReference type="NCBI Taxonomy" id="279010"/>
    <lineage>
        <taxon>Bacteria</taxon>
        <taxon>Bacillati</taxon>
        <taxon>Bacillota</taxon>
        <taxon>Bacilli</taxon>
        <taxon>Bacillales</taxon>
        <taxon>Bacillaceae</taxon>
        <taxon>Bacillus</taxon>
    </lineage>
</organism>
<proteinExistence type="evidence at protein level"/>
<evidence type="ECO:0000250" key="1">
    <source>
        <dbReference type="UniProtKB" id="P39065"/>
    </source>
</evidence>
<evidence type="ECO:0000255" key="2"/>
<evidence type="ECO:0000255" key="3">
    <source>
        <dbReference type="PROSITE-ProRule" id="PRU00532"/>
    </source>
</evidence>
<evidence type="ECO:0000269" key="4">
    <source>
    </source>
</evidence>
<evidence type="ECO:0000269" key="5">
    <source>
    </source>
</evidence>
<evidence type="ECO:0000305" key="6"/>
<evidence type="ECO:0000312" key="7">
    <source>
        <dbReference type="EMBL" id="AAU24622.1"/>
    </source>
</evidence>
<evidence type="ECO:0000312" key="8">
    <source>
        <dbReference type="EMBL" id="AAU41981.1"/>
    </source>
</evidence>
<reference evidence="8" key="1">
    <citation type="journal article" date="2004" name="J. Mol. Microbiol. Biotechnol.">
        <title>The complete genome sequence of Bacillus licheniformis DSM13, an organism with great industrial potential.</title>
        <authorList>
            <person name="Veith B."/>
            <person name="Herzberg C."/>
            <person name="Steckel S."/>
            <person name="Feesche J."/>
            <person name="Maurer K.H."/>
            <person name="Ehrenreich P."/>
            <person name="Baeumer S."/>
            <person name="Henne A."/>
            <person name="Liesegang H."/>
            <person name="Merkl R."/>
            <person name="Ehrenreich A."/>
            <person name="Gottschalk G."/>
        </authorList>
    </citation>
    <scope>NUCLEOTIDE SEQUENCE [LARGE SCALE GENOMIC DNA]</scope>
    <source>
        <strain evidence="8">ATCC 14580 / DSM 13 / JCM 2505 / CCUG 7422 / NBRC 12200 / NCIMB 9375 / NCTC 10341 / NRRL NRS-1264 / Gibson 46</strain>
    </source>
</reference>
<reference evidence="7" key="2">
    <citation type="journal article" date="2004" name="Genome Biol.">
        <title>Complete genome sequence of the industrial bacterium Bacillus licheniformis and comparisons with closely related Bacillus species.</title>
        <authorList>
            <person name="Rey M.W."/>
            <person name="Ramaiya P."/>
            <person name="Nelson B.A."/>
            <person name="Brody-Karpin S.D."/>
            <person name="Zaretsky E.J."/>
            <person name="Tang M."/>
            <person name="Lopez de Leon A."/>
            <person name="Xiang H."/>
            <person name="Gusti V."/>
            <person name="Clausen I.G."/>
            <person name="Olsen P.B."/>
            <person name="Rasmussen M.D."/>
            <person name="Andersen J.T."/>
            <person name="Joergensen P.L."/>
            <person name="Larsen T.S."/>
            <person name="Sorokin A."/>
            <person name="Bolotin A."/>
            <person name="Lapidus A."/>
            <person name="Galleron N."/>
            <person name="Ehrlich S.D."/>
            <person name="Berka R.M."/>
        </authorList>
    </citation>
    <scope>NUCLEOTIDE SEQUENCE [LARGE SCALE GENOMIC DNA]</scope>
    <source>
        <strain>ATCC 14580 / DSM 13 / JCM 2505 / CCUG 7422 / NBRC 12200 / NCIMB 9375 / NCTC 10341 / NRRL NRS-1264 / Gibson 46</strain>
    </source>
</reference>
<reference evidence="6" key="3">
    <citation type="journal article" date="2007" name="Proteomics">
        <title>The glucose and nitrogen starvation response of Bacillus licheniformis.</title>
        <authorList>
            <person name="Voigt B."/>
            <person name="Hoi le T."/>
            <person name="Jurgen B."/>
            <person name="Albrecht D."/>
            <person name="Ehrenreich A."/>
            <person name="Veith B."/>
            <person name="Evers S."/>
            <person name="Maurer K.H."/>
            <person name="Hecker M."/>
            <person name="Schweder T."/>
        </authorList>
    </citation>
    <scope>INDUCTION BY GLUCOSE STARVATION</scope>
    <scope>IDENTIFICATION BY MASS SPECTROMETRY</scope>
    <source>
        <strain evidence="4">ATCC 14580 / DSM 13 / JCM 2505 / CCUG 7422 / NBRC 12200 / NCIMB 9375 / NCTC 10341 / NRRL NRS-1264 / Gibson 46</strain>
    </source>
</reference>
<reference evidence="6" key="4">
    <citation type="journal article" date="2010" name="Appl. Microbiol. Biotechnol.">
        <title>Regulation of acetoin and 2,3-butanediol utilization in Bacillus licheniformis.</title>
        <authorList>
            <person name="Thanh T.N."/>
            <person name="Jurgen B."/>
            <person name="Bauch M."/>
            <person name="Liebeke M."/>
            <person name="Lalk M."/>
            <person name="Ehrenreich A."/>
            <person name="Evers S."/>
            <person name="Maurer K.H."/>
            <person name="Antelmann H."/>
            <person name="Ernst F."/>
            <person name="Homuth G."/>
            <person name="Hecker M."/>
            <person name="Schweder T."/>
        </authorList>
    </citation>
    <scope>OPERON STRUCTURE</scope>
    <scope>INDUCTION BY GLUCOSE STARVATION</scope>
    <scope>DISRUPTION PHENOTYPE</scope>
    <source>
        <strain evidence="5">ATCC 14580 / DSM 13 / JCM 2505 / CCUG 7422 / NBRC 12200 / NCIMB 9375 / NCTC 10341 / NRRL NRS-1264 / Gibson 46</strain>
    </source>
</reference>
<name>ACUA_BACLD</name>
<gene>
    <name evidence="8" type="primary">acuA</name>
    <name type="ordered locus">BL00376</name>
    <name type="ordered locus">BLi03120</name>
</gene>
<feature type="chain" id="PRO_0000422612" description="Acetoin utilization protein AcuA">
    <location>
        <begin position="1"/>
        <end position="210"/>
    </location>
</feature>
<feature type="domain" description="N-acetyltransferase" evidence="3">
    <location>
        <begin position="19"/>
        <end position="189"/>
    </location>
</feature>
<keyword id="KW-0006">Acetoin catabolism</keyword>
<keyword id="KW-0012">Acyltransferase</keyword>
<keyword id="KW-1185">Reference proteome</keyword>
<keyword id="KW-0808">Transferase</keyword>
<dbReference type="EC" id="2.3.1.-" evidence="1 8"/>
<dbReference type="EMBL" id="AE017333">
    <property type="protein sequence ID" value="AAU41981.1"/>
    <property type="molecule type" value="Genomic_DNA"/>
</dbReference>
<dbReference type="EMBL" id="CP000002">
    <property type="protein sequence ID" value="AAU24622.1"/>
    <property type="molecule type" value="Genomic_DNA"/>
</dbReference>
<dbReference type="RefSeq" id="WP_003184432.1">
    <property type="nucleotide sequence ID" value="NC_006322.1"/>
</dbReference>
<dbReference type="SMR" id="Q65G33"/>
<dbReference type="STRING" id="279010.BL00376"/>
<dbReference type="KEGG" id="bld:BLi03120"/>
<dbReference type="KEGG" id="bli:BL00376"/>
<dbReference type="eggNOG" id="COG0454">
    <property type="taxonomic scope" value="Bacteria"/>
</dbReference>
<dbReference type="HOGENOM" id="CLU_113703_0_0_9"/>
<dbReference type="UniPathway" id="UPA00040"/>
<dbReference type="Proteomes" id="UP000000606">
    <property type="component" value="Chromosome"/>
</dbReference>
<dbReference type="GO" id="GO:0019152">
    <property type="term" value="F:acetoin dehydrogenase (NAD+) activity"/>
    <property type="evidence" value="ECO:0000315"/>
    <property type="project" value="UniProtKB"/>
</dbReference>
<dbReference type="GO" id="GO:0043894">
    <property type="term" value="F:acetyl-CoA synthetase acetyltransferase activity"/>
    <property type="evidence" value="ECO:0000250"/>
    <property type="project" value="UniProtKB"/>
</dbReference>
<dbReference type="GO" id="GO:0045150">
    <property type="term" value="P:acetoin catabolic process"/>
    <property type="evidence" value="ECO:0000315"/>
    <property type="project" value="UniProtKB"/>
</dbReference>
<dbReference type="GO" id="GO:0034078">
    <property type="term" value="P:butanediol catabolic process"/>
    <property type="evidence" value="ECO:0000250"/>
    <property type="project" value="UniProtKB"/>
</dbReference>
<dbReference type="GO" id="GO:0042149">
    <property type="term" value="P:cellular response to glucose starvation"/>
    <property type="evidence" value="ECO:0000315"/>
    <property type="project" value="UniProtKB"/>
</dbReference>
<dbReference type="GO" id="GO:0031669">
    <property type="term" value="P:cellular response to nutrient levels"/>
    <property type="evidence" value="ECO:0000315"/>
    <property type="project" value="UniProtKB"/>
</dbReference>
<dbReference type="Gene3D" id="3.40.630.30">
    <property type="match status" value="1"/>
</dbReference>
<dbReference type="InterPro" id="IPR024699">
    <property type="entry name" value="AcuA"/>
</dbReference>
<dbReference type="InterPro" id="IPR016181">
    <property type="entry name" value="Acyl_CoA_acyltransferase"/>
</dbReference>
<dbReference type="InterPro" id="IPR000182">
    <property type="entry name" value="GNAT_dom"/>
</dbReference>
<dbReference type="Pfam" id="PF00583">
    <property type="entry name" value="Acetyltransf_1"/>
    <property type="match status" value="1"/>
</dbReference>
<dbReference type="PIRSF" id="PIRSF021278">
    <property type="entry name" value="AcuA"/>
    <property type="match status" value="1"/>
</dbReference>
<dbReference type="SUPFAM" id="SSF55729">
    <property type="entry name" value="Acyl-CoA N-acyltransferases (Nat)"/>
    <property type="match status" value="1"/>
</dbReference>
<dbReference type="PROSITE" id="PS51186">
    <property type="entry name" value="GNAT"/>
    <property type="match status" value="1"/>
</dbReference>
<comment type="function">
    <text evidence="1 5">Part of the acuABC operon, which is possibly involved in the breakdown of acetoin and butanediol. Acts as an acetyltransferase inactivating acetyl-CoA synthetase AcsA via acetylation at a Lys residue.</text>
</comment>
<comment type="pathway">
    <text evidence="1">Ketone degradation; acetoin degradation.</text>
</comment>
<comment type="subunit">
    <text evidence="1">Monomer.</text>
</comment>
<comment type="induction">
    <text evidence="4 5">Induced by glucose starvation conditions.</text>
</comment>
<comment type="disruption phenotype">
    <text evidence="5">No visible phenotype on growth in medium containing glucose and acetoin or in medium with acetate compared to wild-type. After glucose exhaustion acetoin is quickly consumed similarly to wild-type. In the late exponential growth phase slightly more pyruvate is produced compared to wild-type.</text>
</comment>
<comment type="similarity">
    <text evidence="2">Belongs to the acetyltransferase family.</text>
</comment>